<organism>
    <name type="scientific">Oryza sativa subsp. indica</name>
    <name type="common">Rice</name>
    <dbReference type="NCBI Taxonomy" id="39946"/>
    <lineage>
        <taxon>Eukaryota</taxon>
        <taxon>Viridiplantae</taxon>
        <taxon>Streptophyta</taxon>
        <taxon>Embryophyta</taxon>
        <taxon>Tracheophyta</taxon>
        <taxon>Spermatophyta</taxon>
        <taxon>Magnoliopsida</taxon>
        <taxon>Liliopsida</taxon>
        <taxon>Poales</taxon>
        <taxon>Poaceae</taxon>
        <taxon>BOP clade</taxon>
        <taxon>Oryzoideae</taxon>
        <taxon>Oryzeae</taxon>
        <taxon>Oryzinae</taxon>
        <taxon>Oryza</taxon>
        <taxon>Oryza sativa</taxon>
    </lineage>
</organism>
<protein>
    <recommendedName>
        <fullName>Probable mitochondrial import receptor subunit TOM20</fullName>
    </recommendedName>
    <alternativeName>
        <fullName>Translocase of outer membrane 20 kDa subunit</fullName>
    </alternativeName>
</protein>
<sequence length="201" mass="22475">MDMGAMSDPERMFFFDLACQNAKVTYEQNPHDADNLTRWGGALLELSQMRNGPESLKCLEDAESKLEEALKIDPMKADALWCLGNAQTSHGFFTSDTVKANEFFEKATQCFQKAVDVEPANDLYRKSLDLSSKAPELHMEIHRQMASQASQAASSTSNTRQSRKKKDSDFWYDVFGWVVLGVGMVVWVGLAKSNAPPQAPR</sequence>
<name>TOM20_ORYSI</name>
<gene>
    <name type="primary">TOM20</name>
    <name type="ORF">OsI_04972</name>
</gene>
<keyword id="KW-0472">Membrane</keyword>
<keyword id="KW-0496">Mitochondrion</keyword>
<keyword id="KW-1000">Mitochondrion outer membrane</keyword>
<keyword id="KW-0653">Protein transport</keyword>
<keyword id="KW-1185">Reference proteome</keyword>
<keyword id="KW-0677">Repeat</keyword>
<keyword id="KW-0802">TPR repeat</keyword>
<keyword id="KW-0812">Transmembrane</keyword>
<keyword id="KW-1133">Transmembrane helix</keyword>
<keyword id="KW-0813">Transport</keyword>
<accession>A2WYG9</accession>
<accession>A6N041</accession>
<accession>B8A8F6</accession>
<comment type="function">
    <text evidence="1">Central component of the receptor complex responsible for the recognition and translocation of cytosolically synthesized mitochondrial preproteins. Together with TOM22 functions as the transit peptide receptor at the surface of the mitochondrion outer membrane and facilitates the movement of preproteins into the translocation pore (By similarity).</text>
</comment>
<comment type="subunit">
    <text evidence="1">Forms part of the preprotein translocase complex of the outer mitochondrial membrane (TOM complex).</text>
</comment>
<comment type="subcellular location">
    <subcellularLocation>
        <location evidence="4">Mitochondrion outer membrane</location>
        <topology evidence="4">Single-pass membrane protein</topology>
    </subcellularLocation>
</comment>
<comment type="induction">
    <text evidence="3">By salt-stress.</text>
</comment>
<comment type="miscellaneous">
    <text>In mammals and fungi, the transmembrane domain is located at the N-terminus while it is located at the C-terminus in plants. The overall orientation of the protein in the membrane is therefore inverted.</text>
</comment>
<comment type="similarity">
    <text evidence="4">Belongs to the Tom20 family.</text>
</comment>
<dbReference type="EMBL" id="CM000126">
    <property type="protein sequence ID" value="EEC72059.1"/>
    <property type="molecule type" value="Genomic_DNA"/>
</dbReference>
<dbReference type="EMBL" id="EF576023">
    <property type="protein sequence ID" value="ABR25611.1"/>
    <property type="molecule type" value="mRNA"/>
</dbReference>
<dbReference type="SMR" id="A2WYG9"/>
<dbReference type="STRING" id="39946.A2WYG9"/>
<dbReference type="EnsemblPlants" id="BGIOSGA005073-TA">
    <property type="protein sequence ID" value="BGIOSGA005073-PA"/>
    <property type="gene ID" value="BGIOSGA005073"/>
</dbReference>
<dbReference type="Gramene" id="BGIOSGA005073-TA">
    <property type="protein sequence ID" value="BGIOSGA005073-PA"/>
    <property type="gene ID" value="BGIOSGA005073"/>
</dbReference>
<dbReference type="HOGENOM" id="CLU_117357_0_0_1"/>
<dbReference type="OMA" id="FAKSHPP"/>
<dbReference type="Proteomes" id="UP000007015">
    <property type="component" value="Chromosome 1"/>
</dbReference>
<dbReference type="GO" id="GO:0005742">
    <property type="term" value="C:mitochondrial outer membrane translocase complex"/>
    <property type="evidence" value="ECO:0007669"/>
    <property type="project" value="InterPro"/>
</dbReference>
<dbReference type="GO" id="GO:0045040">
    <property type="term" value="P:protein insertion into mitochondrial outer membrane"/>
    <property type="evidence" value="ECO:0007669"/>
    <property type="project" value="InterPro"/>
</dbReference>
<dbReference type="Gene3D" id="1.25.40.10">
    <property type="entry name" value="Tetratricopeptide repeat domain"/>
    <property type="match status" value="1"/>
</dbReference>
<dbReference type="InterPro" id="IPR010547">
    <property type="entry name" value="TOM20_imprt_rcpt"/>
</dbReference>
<dbReference type="InterPro" id="IPR011990">
    <property type="entry name" value="TPR-like_helical_dom_sf"/>
</dbReference>
<dbReference type="PANTHER" id="PTHR32409">
    <property type="entry name" value="MITOCHONDRIAL IMPORT RECEPTOR SUBUNIT TOM20-1-RELATED"/>
    <property type="match status" value="1"/>
</dbReference>
<dbReference type="PANTHER" id="PTHR32409:SF3">
    <property type="entry name" value="MITOCHONDRIAL IMPORT RECEPTOR SUBUNIT TOM20-1-RELATED"/>
    <property type="match status" value="1"/>
</dbReference>
<dbReference type="Pfam" id="PF06552">
    <property type="entry name" value="TOM20_plant"/>
    <property type="match status" value="1"/>
</dbReference>
<dbReference type="SUPFAM" id="SSF48452">
    <property type="entry name" value="TPR-like"/>
    <property type="match status" value="1"/>
</dbReference>
<proteinExistence type="evidence at transcript level"/>
<feature type="chain" id="PRO_0000356193" description="Probable mitochondrial import receptor subunit TOM20">
    <location>
        <begin position="1"/>
        <end position="201"/>
    </location>
</feature>
<feature type="topological domain" description="Cytoplasmic" evidence="2">
    <location>
        <begin position="1"/>
        <end position="169"/>
    </location>
</feature>
<feature type="transmembrane region" description="Helical" evidence="2">
    <location>
        <begin position="170"/>
        <end position="190"/>
    </location>
</feature>
<feature type="topological domain" description="Mitochondrial intermembrane" evidence="2">
    <location>
        <begin position="191"/>
        <end position="201"/>
    </location>
</feature>
<feature type="repeat" description="TPR 1">
    <location>
        <begin position="43"/>
        <end position="76"/>
    </location>
</feature>
<feature type="repeat" description="TPR 2">
    <location>
        <begin position="88"/>
        <end position="121"/>
    </location>
</feature>
<reference key="1">
    <citation type="journal article" date="2005" name="PLoS Biol.">
        <title>The genomes of Oryza sativa: a history of duplications.</title>
        <authorList>
            <person name="Yu J."/>
            <person name="Wang J."/>
            <person name="Lin W."/>
            <person name="Li S."/>
            <person name="Li H."/>
            <person name="Zhou J."/>
            <person name="Ni P."/>
            <person name="Dong W."/>
            <person name="Hu S."/>
            <person name="Zeng C."/>
            <person name="Zhang J."/>
            <person name="Zhang Y."/>
            <person name="Li R."/>
            <person name="Xu Z."/>
            <person name="Li S."/>
            <person name="Li X."/>
            <person name="Zheng H."/>
            <person name="Cong L."/>
            <person name="Lin L."/>
            <person name="Yin J."/>
            <person name="Geng J."/>
            <person name="Li G."/>
            <person name="Shi J."/>
            <person name="Liu J."/>
            <person name="Lv H."/>
            <person name="Li J."/>
            <person name="Wang J."/>
            <person name="Deng Y."/>
            <person name="Ran L."/>
            <person name="Shi X."/>
            <person name="Wang X."/>
            <person name="Wu Q."/>
            <person name="Li C."/>
            <person name="Ren X."/>
            <person name="Wang J."/>
            <person name="Wang X."/>
            <person name="Li D."/>
            <person name="Liu D."/>
            <person name="Zhang X."/>
            <person name="Ji Z."/>
            <person name="Zhao W."/>
            <person name="Sun Y."/>
            <person name="Zhang Z."/>
            <person name="Bao J."/>
            <person name="Han Y."/>
            <person name="Dong L."/>
            <person name="Ji J."/>
            <person name="Chen P."/>
            <person name="Wu S."/>
            <person name="Liu J."/>
            <person name="Xiao Y."/>
            <person name="Bu D."/>
            <person name="Tan J."/>
            <person name="Yang L."/>
            <person name="Ye C."/>
            <person name="Zhang J."/>
            <person name="Xu J."/>
            <person name="Zhou Y."/>
            <person name="Yu Y."/>
            <person name="Zhang B."/>
            <person name="Zhuang S."/>
            <person name="Wei H."/>
            <person name="Liu B."/>
            <person name="Lei M."/>
            <person name="Yu H."/>
            <person name="Li Y."/>
            <person name="Xu H."/>
            <person name="Wei S."/>
            <person name="He X."/>
            <person name="Fang L."/>
            <person name="Zhang Z."/>
            <person name="Zhang Y."/>
            <person name="Huang X."/>
            <person name="Su Z."/>
            <person name="Tong W."/>
            <person name="Li J."/>
            <person name="Tong Z."/>
            <person name="Li S."/>
            <person name="Ye J."/>
            <person name="Wang L."/>
            <person name="Fang L."/>
            <person name="Lei T."/>
            <person name="Chen C.-S."/>
            <person name="Chen H.-C."/>
            <person name="Xu Z."/>
            <person name="Li H."/>
            <person name="Huang H."/>
            <person name="Zhang F."/>
            <person name="Xu H."/>
            <person name="Li N."/>
            <person name="Zhao C."/>
            <person name="Li S."/>
            <person name="Dong L."/>
            <person name="Huang Y."/>
            <person name="Li L."/>
            <person name="Xi Y."/>
            <person name="Qi Q."/>
            <person name="Li W."/>
            <person name="Zhang B."/>
            <person name="Hu W."/>
            <person name="Zhang Y."/>
            <person name="Tian X."/>
            <person name="Jiao Y."/>
            <person name="Liang X."/>
            <person name="Jin J."/>
            <person name="Gao L."/>
            <person name="Zheng W."/>
            <person name="Hao B."/>
            <person name="Liu S.-M."/>
            <person name="Wang W."/>
            <person name="Yuan L."/>
            <person name="Cao M."/>
            <person name="McDermott J."/>
            <person name="Samudrala R."/>
            <person name="Wang J."/>
            <person name="Wong G.K.-S."/>
            <person name="Yang H."/>
        </authorList>
    </citation>
    <scope>NUCLEOTIDE SEQUENCE [LARGE SCALE GENOMIC DNA]</scope>
    <source>
        <strain>cv. 93-11</strain>
    </source>
</reference>
<reference key="2">
    <citation type="journal article" date="2009" name="Funct. Integr. Genomics">
        <title>Transcriptome map for seedling stage specific salinity stress response indicates a specific set of genes as candidate for saline tolerance in Oryza sativa L.</title>
        <authorList>
            <person name="Kumari S."/>
            <person name="Panjabi Nee Sabharwal V."/>
            <person name="Kushwaha H.R."/>
            <person name="Sopory S.K."/>
            <person name="Singla-Pareek S.L."/>
            <person name="Pareek A."/>
        </authorList>
    </citation>
    <scope>NUCLEOTIDE SEQUENCE [MRNA] OF 46-201</scope>
    <scope>INDUCTION</scope>
    <source>
        <strain>cv. IR64</strain>
    </source>
</reference>
<evidence type="ECO:0000250" key="1"/>
<evidence type="ECO:0000255" key="2"/>
<evidence type="ECO:0000269" key="3">
    <source>
    </source>
</evidence>
<evidence type="ECO:0000305" key="4"/>